<comment type="function">
    <text>Component of the large subunit of mitochondrial ribosome.</text>
</comment>
<comment type="subcellular location">
    <subcellularLocation>
        <location>Mitochondrion</location>
    </subcellularLocation>
</comment>
<comment type="similarity">
    <text evidence="2">Belongs to the bacterial ribosomal protein bL27 family.</text>
</comment>
<evidence type="ECO:0000250" key="1"/>
<evidence type="ECO:0000305" key="2"/>
<sequence length="364" mass="42635">MFSSSWQQVPKFVVQQVRTATKRAAGSRTSMKDSAGRRLGPKKYEGQATQVGEIIMRQRGTKFYPGENVGIGKDHTLFALEPGYVRYYLDPFHPGKKFIGVSLYKDVKLPLPHFEPRLRRFGKAIIEDEEKAIAEENALPRKIYLLKDELIKKQQEREIKREELKAEYSKIISDLKVELDQQELAFALPYLLRWRTCLKNGFNESDARFNSYYYLEQELKLKMRNQEKSKLDDKLTLLKQVSTKLNESLSFNNKLELTKYISPEEKNTLKTQLITDLKAIDIKDKNSKKQVLAKFTDAKNFLTLSEEVRLRRKFLKPVKPETELKKLEEPLKPSKKNLTTRRYNYEQNTIDVITRPKTDFLSKL</sequence>
<protein>
    <recommendedName>
        <fullName evidence="2">Large ribosomal subunit protein bL27m</fullName>
    </recommendedName>
    <alternativeName>
        <fullName>54S ribosomal protein L2, mitochondrial</fullName>
    </alternativeName>
</protein>
<proteinExistence type="inferred from homology"/>
<name>RM02_KLULA</name>
<dbReference type="EMBL" id="U38369">
    <property type="protein sequence ID" value="AAA79723.1"/>
    <property type="molecule type" value="Genomic_DNA"/>
</dbReference>
<dbReference type="EMBL" id="CR382126">
    <property type="protein sequence ID" value="CAG98348.1"/>
    <property type="molecule type" value="Genomic_DNA"/>
</dbReference>
<dbReference type="RefSeq" id="XP_455640.1">
    <property type="nucleotide sequence ID" value="XM_455640.1"/>
</dbReference>
<dbReference type="SMR" id="P48535"/>
<dbReference type="FunCoup" id="P48535">
    <property type="interactions" value="320"/>
</dbReference>
<dbReference type="STRING" id="284590.P48535"/>
<dbReference type="PaxDb" id="284590-P48535"/>
<dbReference type="KEGG" id="kla:KLLA0_F12386g"/>
<dbReference type="eggNOG" id="KOG4600">
    <property type="taxonomic scope" value="Eukaryota"/>
</dbReference>
<dbReference type="HOGENOM" id="CLU_063752_0_0_1"/>
<dbReference type="InParanoid" id="P48535"/>
<dbReference type="OMA" id="YLDPFHP"/>
<dbReference type="Proteomes" id="UP000000598">
    <property type="component" value="Chromosome F"/>
</dbReference>
<dbReference type="GO" id="GO:0005762">
    <property type="term" value="C:mitochondrial large ribosomal subunit"/>
    <property type="evidence" value="ECO:0007669"/>
    <property type="project" value="TreeGrafter"/>
</dbReference>
<dbReference type="GO" id="GO:0003735">
    <property type="term" value="F:structural constituent of ribosome"/>
    <property type="evidence" value="ECO:0007669"/>
    <property type="project" value="InterPro"/>
</dbReference>
<dbReference type="GO" id="GO:0006412">
    <property type="term" value="P:translation"/>
    <property type="evidence" value="ECO:0007669"/>
    <property type="project" value="InterPro"/>
</dbReference>
<dbReference type="FunFam" id="2.40.50.100:FF:000042">
    <property type="entry name" value="50S ribosomal protein L27"/>
    <property type="match status" value="1"/>
</dbReference>
<dbReference type="Gene3D" id="2.40.50.100">
    <property type="match status" value="1"/>
</dbReference>
<dbReference type="InterPro" id="IPR001684">
    <property type="entry name" value="Ribosomal_bL27"/>
</dbReference>
<dbReference type="InterPro" id="IPR018261">
    <property type="entry name" value="Ribosomal_bL27_CS"/>
</dbReference>
<dbReference type="InterPro" id="IPR041244">
    <property type="entry name" value="Ribosomal_bL27m_C"/>
</dbReference>
<dbReference type="NCBIfam" id="TIGR00062">
    <property type="entry name" value="L27"/>
    <property type="match status" value="1"/>
</dbReference>
<dbReference type="PANTHER" id="PTHR15893:SF0">
    <property type="entry name" value="LARGE RIBOSOMAL SUBUNIT PROTEIN BL27M"/>
    <property type="match status" value="1"/>
</dbReference>
<dbReference type="PANTHER" id="PTHR15893">
    <property type="entry name" value="RIBOSOMAL PROTEIN L27"/>
    <property type="match status" value="1"/>
</dbReference>
<dbReference type="Pfam" id="PF01016">
    <property type="entry name" value="Ribosomal_L27"/>
    <property type="match status" value="1"/>
</dbReference>
<dbReference type="Pfam" id="PF18471">
    <property type="entry name" value="Ribosomal_L27_C"/>
    <property type="match status" value="1"/>
</dbReference>
<dbReference type="PRINTS" id="PR00063">
    <property type="entry name" value="RIBOSOMALL27"/>
</dbReference>
<dbReference type="SUPFAM" id="SSF110324">
    <property type="entry name" value="Ribosomal L27 protein-like"/>
    <property type="match status" value="1"/>
</dbReference>
<dbReference type="PROSITE" id="PS00831">
    <property type="entry name" value="RIBOSOMAL_L27"/>
    <property type="match status" value="1"/>
</dbReference>
<keyword id="KW-0496">Mitochondrion</keyword>
<keyword id="KW-1185">Reference proteome</keyword>
<keyword id="KW-0687">Ribonucleoprotein</keyword>
<keyword id="KW-0689">Ribosomal protein</keyword>
<keyword id="KW-0809">Transit peptide</keyword>
<accession>P48535</accession>
<accession>Q6CK99</accession>
<reference key="1">
    <citation type="book" date="1993" name="The translational apparatus">
        <title>Essential features of the peptidyl transferase center in the yeast mitochondrial ribosome.</title>
        <editorList>
            <person name="Nierhaus K.H."/>
        </editorList>
        <authorList>
            <person name="Pan C."/>
            <person name="Sirum-Connolly K."/>
            <person name="Mason T.L."/>
        </authorList>
    </citation>
    <scope>NUCLEOTIDE SEQUENCE [GENOMIC DNA]</scope>
</reference>
<reference key="2">
    <citation type="journal article" date="2004" name="Nature">
        <title>Genome evolution in yeasts.</title>
        <authorList>
            <person name="Dujon B."/>
            <person name="Sherman D."/>
            <person name="Fischer G."/>
            <person name="Durrens P."/>
            <person name="Casaregola S."/>
            <person name="Lafontaine I."/>
            <person name="de Montigny J."/>
            <person name="Marck C."/>
            <person name="Neuveglise C."/>
            <person name="Talla E."/>
            <person name="Goffard N."/>
            <person name="Frangeul L."/>
            <person name="Aigle M."/>
            <person name="Anthouard V."/>
            <person name="Babour A."/>
            <person name="Barbe V."/>
            <person name="Barnay S."/>
            <person name="Blanchin S."/>
            <person name="Beckerich J.-M."/>
            <person name="Beyne E."/>
            <person name="Bleykasten C."/>
            <person name="Boisrame A."/>
            <person name="Boyer J."/>
            <person name="Cattolico L."/>
            <person name="Confanioleri F."/>
            <person name="de Daruvar A."/>
            <person name="Despons L."/>
            <person name="Fabre E."/>
            <person name="Fairhead C."/>
            <person name="Ferry-Dumazet H."/>
            <person name="Groppi A."/>
            <person name="Hantraye F."/>
            <person name="Hennequin C."/>
            <person name="Jauniaux N."/>
            <person name="Joyet P."/>
            <person name="Kachouri R."/>
            <person name="Kerrest A."/>
            <person name="Koszul R."/>
            <person name="Lemaire M."/>
            <person name="Lesur I."/>
            <person name="Ma L."/>
            <person name="Muller H."/>
            <person name="Nicaud J.-M."/>
            <person name="Nikolski M."/>
            <person name="Oztas S."/>
            <person name="Ozier-Kalogeropoulos O."/>
            <person name="Pellenz S."/>
            <person name="Potier S."/>
            <person name="Richard G.-F."/>
            <person name="Straub M.-L."/>
            <person name="Suleau A."/>
            <person name="Swennen D."/>
            <person name="Tekaia F."/>
            <person name="Wesolowski-Louvel M."/>
            <person name="Westhof E."/>
            <person name="Wirth B."/>
            <person name="Zeniou-Meyer M."/>
            <person name="Zivanovic Y."/>
            <person name="Bolotin-Fukuhara M."/>
            <person name="Thierry A."/>
            <person name="Bouchier C."/>
            <person name="Caudron B."/>
            <person name="Scarpelli C."/>
            <person name="Gaillardin C."/>
            <person name="Weissenbach J."/>
            <person name="Wincker P."/>
            <person name="Souciet J.-L."/>
        </authorList>
    </citation>
    <scope>NUCLEOTIDE SEQUENCE [LARGE SCALE GENOMIC DNA]</scope>
    <source>
        <strain>ATCC 8585 / CBS 2359 / DSM 70799 / NBRC 1267 / NRRL Y-1140 / WM37</strain>
    </source>
</reference>
<gene>
    <name type="primary">MRPL2</name>
    <name type="synonym">MRP7</name>
    <name type="ordered locus">KLLA0F12386g</name>
</gene>
<organism>
    <name type="scientific">Kluyveromyces lactis (strain ATCC 8585 / CBS 2359 / DSM 70799 / NBRC 1267 / NRRL Y-1140 / WM37)</name>
    <name type="common">Yeast</name>
    <name type="synonym">Candida sphaerica</name>
    <dbReference type="NCBI Taxonomy" id="284590"/>
    <lineage>
        <taxon>Eukaryota</taxon>
        <taxon>Fungi</taxon>
        <taxon>Dikarya</taxon>
        <taxon>Ascomycota</taxon>
        <taxon>Saccharomycotina</taxon>
        <taxon>Saccharomycetes</taxon>
        <taxon>Saccharomycetales</taxon>
        <taxon>Saccharomycetaceae</taxon>
        <taxon>Kluyveromyces</taxon>
    </lineage>
</organism>
<feature type="transit peptide" description="Mitochondrion" evidence="1">
    <location>
        <begin position="1"/>
        <end position="19"/>
    </location>
</feature>
<feature type="chain" id="PRO_0000030500" description="Large ribosomal subunit protein bL27m">
    <location>
        <begin position="20"/>
        <end position="364"/>
    </location>
</feature>
<feature type="sequence conflict" description="In Ref. 1; AAA79723." evidence="2" ref="1">
    <original>A</original>
    <variation>R</variation>
    <location>
        <position position="298"/>
    </location>
</feature>